<protein>
    <recommendedName>
        <fullName>Pre-mRNA-processing ATP-dependent RNA helicase PRP5</fullName>
        <ecNumber>3.6.4.13</ecNumber>
    </recommendedName>
</protein>
<gene>
    <name type="primary">PRP5</name>
    <name type="ORF">SNOG_06807</name>
</gene>
<proteinExistence type="inferred from homology"/>
<name>PRP5_PHANO</name>
<keyword id="KW-0067">ATP-binding</keyword>
<keyword id="KW-0347">Helicase</keyword>
<keyword id="KW-0378">Hydrolase</keyword>
<keyword id="KW-0507">mRNA processing</keyword>
<keyword id="KW-0508">mRNA splicing</keyword>
<keyword id="KW-0547">Nucleotide-binding</keyword>
<keyword id="KW-0539">Nucleus</keyword>
<sequence>MHGHRASASAIHPDYPVTHRESTWRRATLIVQGSTATVDDTLRPAVPARGLQAAEIAREIATEIATAVAEVVTTVTVLEIDVTTAETTAAMTVETTAETAAAHVHHPVARGHRTAEMIVTAETTAGTTAGTTVAMIGTGVEVPRHVGQARDVLQPHRPRTSAATREERVNPEKQKEDKLAERAAKLLEWKKRKEAERLAQEKAGTPGSGASPAGSVPSTPAVAATPPPREAKPTVAKSKVPKPATEKVKQKQPEKSSFKLDESAAARPLIAKPAGKPVAIAAASKYHHIDYKCSNQLTQTDGAAAAATTKANGNIGSFGLKTKSTAEEDISSKALLDDEIDTGKRKLQALPVFATHDEPETTAGVEDDAAMSDIGTDDDETNAQLQAKLQSRRAELSHDQAADKDTNMEEVPTADNTGDQMDVDDNAGAEEDDVDPLDAFMADLSVPQQPSRAAPQGETMFNDDLEPEQTAVEGEDLLALRAAKKKKKEVPTINHEKVEYEPFRKDFYTEPAEITQMSAEDVADLRHELDGIKVKPDDVPRPVTKWAQMGLLQQTMDVFTRVGYARPTAIQAQAIPIAESGRDLIGVAKTGSGKTLAFGIPMIRHVLDQRPLKPADGPIGLILAPTRELSLQIVNELKPFLNASGITIKCAYGGQPISDQIAMIKRGGIHILCATAGRLIDLLQSNSGRVLSFRRITYVVLDEADRMFDMGFEPQVMKILASIRPDRQTILFSATFPKTMAALARKALDKPAEVIIGGRSKVAPEITQHITIVPPSYEKKIAKLLHHLGQTFSDDENAQVLIFTERQETAEDLLSKLFKAKYFAVNTIHGAKDQTDRNEAINEFKQGLLNILIATSVAARGLDVPGLALVYNFDCPTHLEDYVHRCGRTGRAGNKGLAVTLIENPGQERFAVHIVKALKESGAEVPDDLQAMANAFHEKVKSGTEKYYNVGFKGKGLDELDASRALDKKREKRALKLGDDDASDDEPDLPKLKKPEASGPGVAKSTNGDAAAEPVQDEPAWKKLLLGKIVVNKTERAETGKPTTAKERAMAAARKIDGNLSRKGTVHAGQPIDNKGPDAGLYHSTLEINDFPQKARWAVTNRTNVAKILDATGVSITTKGNFYGPGKEPGETDLPKLYILVEGDTEGVVTQAMLELTRLLTDATVAAEEAASTRGPTGRYSVMS</sequence>
<accession>Q0UN57</accession>
<comment type="function">
    <text evidence="1">ATP-dependent RNA helicase involved spliceosome assembly and in nuclear splicing. Catalyzes an ATP-dependent conformational change of U2 snRNP. Bridges U1 and U2 snRNPs and enables stable U2 snRNP association with intron RNA (By similarity).</text>
</comment>
<comment type="catalytic activity">
    <reaction>
        <text>ATP + H2O = ADP + phosphate + H(+)</text>
        <dbReference type="Rhea" id="RHEA:13065"/>
        <dbReference type="ChEBI" id="CHEBI:15377"/>
        <dbReference type="ChEBI" id="CHEBI:15378"/>
        <dbReference type="ChEBI" id="CHEBI:30616"/>
        <dbReference type="ChEBI" id="CHEBI:43474"/>
        <dbReference type="ChEBI" id="CHEBI:456216"/>
        <dbReference type="EC" id="3.6.4.13"/>
    </reaction>
</comment>
<comment type="subcellular location">
    <subcellularLocation>
        <location evidence="1">Nucleus</location>
    </subcellularLocation>
</comment>
<comment type="domain">
    <text>The Q motif is unique to and characteristic of the DEAD box family of RNA helicases and controls ATP binding and hydrolysis.</text>
</comment>
<comment type="similarity">
    <text evidence="5">Belongs to the DEAD box helicase family. DDX46/PRP5 subfamily.</text>
</comment>
<feature type="chain" id="PRO_0000256035" description="Pre-mRNA-processing ATP-dependent RNA helicase PRP5">
    <location>
        <begin position="1"/>
        <end position="1184"/>
    </location>
</feature>
<feature type="domain" description="Helicase ATP-binding" evidence="2">
    <location>
        <begin position="575"/>
        <end position="754"/>
    </location>
</feature>
<feature type="domain" description="Helicase C-terminal" evidence="3">
    <location>
        <begin position="780"/>
        <end position="933"/>
    </location>
</feature>
<feature type="region of interest" description="Disordered" evidence="4">
    <location>
        <begin position="148"/>
        <end position="178"/>
    </location>
</feature>
<feature type="region of interest" description="Disordered" evidence="4">
    <location>
        <begin position="197"/>
        <end position="262"/>
    </location>
</feature>
<feature type="region of interest" description="Disordered" evidence="4">
    <location>
        <begin position="356"/>
        <end position="377"/>
    </location>
</feature>
<feature type="region of interest" description="Disordered" evidence="4">
    <location>
        <begin position="389"/>
        <end position="433"/>
    </location>
</feature>
<feature type="region of interest" description="Disordered" evidence="4">
    <location>
        <begin position="973"/>
        <end position="1016"/>
    </location>
</feature>
<feature type="short sequence motif" description="Q motif">
    <location>
        <begin position="544"/>
        <end position="572"/>
    </location>
</feature>
<feature type="short sequence motif" description="DEAD box">
    <location>
        <begin position="702"/>
        <end position="705"/>
    </location>
</feature>
<feature type="compositionally biased region" description="Basic and acidic residues" evidence="4">
    <location>
        <begin position="164"/>
        <end position="178"/>
    </location>
</feature>
<feature type="compositionally biased region" description="Low complexity" evidence="4">
    <location>
        <begin position="203"/>
        <end position="224"/>
    </location>
</feature>
<feature type="compositionally biased region" description="Basic and acidic residues" evidence="4">
    <location>
        <begin position="244"/>
        <end position="262"/>
    </location>
</feature>
<feature type="compositionally biased region" description="Acidic residues" evidence="4">
    <location>
        <begin position="365"/>
        <end position="377"/>
    </location>
</feature>
<feature type="compositionally biased region" description="Basic and acidic residues" evidence="4">
    <location>
        <begin position="392"/>
        <end position="407"/>
    </location>
</feature>
<feature type="compositionally biased region" description="Acidic residues" evidence="4">
    <location>
        <begin position="421"/>
        <end position="433"/>
    </location>
</feature>
<feature type="binding site" evidence="2">
    <location>
        <begin position="588"/>
        <end position="595"/>
    </location>
    <ligand>
        <name>ATP</name>
        <dbReference type="ChEBI" id="CHEBI:30616"/>
    </ligand>
</feature>
<dbReference type="EC" id="3.6.4.13"/>
<dbReference type="EMBL" id="CH445334">
    <property type="protein sequence ID" value="EAT85458.2"/>
    <property type="molecule type" value="Genomic_DNA"/>
</dbReference>
<dbReference type="RefSeq" id="XP_001797169.1">
    <property type="nucleotide sequence ID" value="XM_001797117.1"/>
</dbReference>
<dbReference type="SMR" id="Q0UN57"/>
<dbReference type="FunCoup" id="Q0UN57">
    <property type="interactions" value="971"/>
</dbReference>
<dbReference type="STRING" id="321614.Q0UN57"/>
<dbReference type="EnsemblFungi" id="SNOT_06807">
    <property type="protein sequence ID" value="SNOT_06807"/>
    <property type="gene ID" value="SNOG_06807"/>
</dbReference>
<dbReference type="GeneID" id="5974059"/>
<dbReference type="KEGG" id="pno:SNOG_06807"/>
<dbReference type="VEuPathDB" id="FungiDB:JI435_068070"/>
<dbReference type="eggNOG" id="KOG0334">
    <property type="taxonomic scope" value="Eukaryota"/>
</dbReference>
<dbReference type="HOGENOM" id="CLU_003041_0_3_1"/>
<dbReference type="InParanoid" id="Q0UN57"/>
<dbReference type="Proteomes" id="UP000001055">
    <property type="component" value="Unassembled WGS sequence"/>
</dbReference>
<dbReference type="GO" id="GO:0005634">
    <property type="term" value="C:nucleus"/>
    <property type="evidence" value="ECO:0000318"/>
    <property type="project" value="GO_Central"/>
</dbReference>
<dbReference type="GO" id="GO:0005524">
    <property type="term" value="F:ATP binding"/>
    <property type="evidence" value="ECO:0007669"/>
    <property type="project" value="UniProtKB-KW"/>
</dbReference>
<dbReference type="GO" id="GO:0016887">
    <property type="term" value="F:ATP hydrolysis activity"/>
    <property type="evidence" value="ECO:0007669"/>
    <property type="project" value="RHEA"/>
</dbReference>
<dbReference type="GO" id="GO:0003676">
    <property type="term" value="F:nucleic acid binding"/>
    <property type="evidence" value="ECO:0007669"/>
    <property type="project" value="InterPro"/>
</dbReference>
<dbReference type="GO" id="GO:0003724">
    <property type="term" value="F:RNA helicase activity"/>
    <property type="evidence" value="ECO:0007669"/>
    <property type="project" value="UniProtKB-EC"/>
</dbReference>
<dbReference type="GO" id="GO:0000398">
    <property type="term" value="P:mRNA splicing, via spliceosome"/>
    <property type="evidence" value="ECO:0000318"/>
    <property type="project" value="GO_Central"/>
</dbReference>
<dbReference type="CDD" id="cd18787">
    <property type="entry name" value="SF2_C_DEAD"/>
    <property type="match status" value="1"/>
</dbReference>
<dbReference type="FunFam" id="3.40.50.300:FF:000079">
    <property type="entry name" value="probable ATP-dependent RNA helicase DDX17"/>
    <property type="match status" value="1"/>
</dbReference>
<dbReference type="Gene3D" id="3.40.50.300">
    <property type="entry name" value="P-loop containing nucleotide triphosphate hydrolases"/>
    <property type="match status" value="2"/>
</dbReference>
<dbReference type="InterPro" id="IPR011545">
    <property type="entry name" value="DEAD/DEAH_box_helicase_dom"/>
</dbReference>
<dbReference type="InterPro" id="IPR014001">
    <property type="entry name" value="Helicase_ATP-bd"/>
</dbReference>
<dbReference type="InterPro" id="IPR001650">
    <property type="entry name" value="Helicase_C-like"/>
</dbReference>
<dbReference type="InterPro" id="IPR027417">
    <property type="entry name" value="P-loop_NTPase"/>
</dbReference>
<dbReference type="InterPro" id="IPR056149">
    <property type="entry name" value="PRP5/DDX46/KHDC4_KH"/>
</dbReference>
<dbReference type="InterPro" id="IPR000629">
    <property type="entry name" value="RNA-helicase_DEAD-box_CS"/>
</dbReference>
<dbReference type="InterPro" id="IPR014014">
    <property type="entry name" value="RNA_helicase_DEAD_Q_motif"/>
</dbReference>
<dbReference type="PANTHER" id="PTHR47958">
    <property type="entry name" value="ATP-DEPENDENT RNA HELICASE DBP3"/>
    <property type="match status" value="1"/>
</dbReference>
<dbReference type="Pfam" id="PF00270">
    <property type="entry name" value="DEAD"/>
    <property type="match status" value="1"/>
</dbReference>
<dbReference type="Pfam" id="PF00271">
    <property type="entry name" value="Helicase_C"/>
    <property type="match status" value="1"/>
</dbReference>
<dbReference type="Pfam" id="PF23469">
    <property type="entry name" value="KH_12"/>
    <property type="match status" value="1"/>
</dbReference>
<dbReference type="SMART" id="SM00487">
    <property type="entry name" value="DEXDc"/>
    <property type="match status" value="1"/>
</dbReference>
<dbReference type="SMART" id="SM00490">
    <property type="entry name" value="HELICc"/>
    <property type="match status" value="1"/>
</dbReference>
<dbReference type="SUPFAM" id="SSF52540">
    <property type="entry name" value="P-loop containing nucleoside triphosphate hydrolases"/>
    <property type="match status" value="1"/>
</dbReference>
<dbReference type="PROSITE" id="PS00039">
    <property type="entry name" value="DEAD_ATP_HELICASE"/>
    <property type="match status" value="1"/>
</dbReference>
<dbReference type="PROSITE" id="PS51192">
    <property type="entry name" value="HELICASE_ATP_BIND_1"/>
    <property type="match status" value="1"/>
</dbReference>
<dbReference type="PROSITE" id="PS51194">
    <property type="entry name" value="HELICASE_CTER"/>
    <property type="match status" value="1"/>
</dbReference>
<dbReference type="PROSITE" id="PS51195">
    <property type="entry name" value="Q_MOTIF"/>
    <property type="match status" value="1"/>
</dbReference>
<evidence type="ECO:0000250" key="1"/>
<evidence type="ECO:0000255" key="2">
    <source>
        <dbReference type="PROSITE-ProRule" id="PRU00541"/>
    </source>
</evidence>
<evidence type="ECO:0000255" key="3">
    <source>
        <dbReference type="PROSITE-ProRule" id="PRU00542"/>
    </source>
</evidence>
<evidence type="ECO:0000256" key="4">
    <source>
        <dbReference type="SAM" id="MobiDB-lite"/>
    </source>
</evidence>
<evidence type="ECO:0000305" key="5"/>
<reference key="1">
    <citation type="journal article" date="2007" name="Plant Cell">
        <title>Dothideomycete-plant interactions illuminated by genome sequencing and EST analysis of the wheat pathogen Stagonospora nodorum.</title>
        <authorList>
            <person name="Hane J.K."/>
            <person name="Lowe R.G.T."/>
            <person name="Solomon P.S."/>
            <person name="Tan K.-C."/>
            <person name="Schoch C.L."/>
            <person name="Spatafora J.W."/>
            <person name="Crous P.W."/>
            <person name="Kodira C.D."/>
            <person name="Birren B.W."/>
            <person name="Galagan J.E."/>
            <person name="Torriani S.F.F."/>
            <person name="McDonald B.A."/>
            <person name="Oliver R.P."/>
        </authorList>
    </citation>
    <scope>NUCLEOTIDE SEQUENCE [LARGE SCALE GENOMIC DNA]</scope>
    <source>
        <strain>SN15 / ATCC MYA-4574 / FGSC 10173</strain>
    </source>
</reference>
<organism>
    <name type="scientific">Phaeosphaeria nodorum (strain SN15 / ATCC MYA-4574 / FGSC 10173)</name>
    <name type="common">Glume blotch fungus</name>
    <name type="synonym">Parastagonospora nodorum</name>
    <dbReference type="NCBI Taxonomy" id="321614"/>
    <lineage>
        <taxon>Eukaryota</taxon>
        <taxon>Fungi</taxon>
        <taxon>Dikarya</taxon>
        <taxon>Ascomycota</taxon>
        <taxon>Pezizomycotina</taxon>
        <taxon>Dothideomycetes</taxon>
        <taxon>Pleosporomycetidae</taxon>
        <taxon>Pleosporales</taxon>
        <taxon>Pleosporineae</taxon>
        <taxon>Phaeosphaeriaceae</taxon>
        <taxon>Parastagonospora</taxon>
    </lineage>
</organism>